<gene>
    <name evidence="1" type="primary">rny</name>
    <name type="ordered locus">BALH_3406</name>
</gene>
<sequence>MSSTVWILISILLATVGAVVGFFVRKSIAEAKINGAANEAKRILDEANREAEALKKEALLEAKDEIHTLRTEAELEIRDRRSELQKQENRLMQKEENLDRKDETLDKRELQLEKKEDSLVARQQQIEELESKVGELVQKQQTELERISNLTREQAKAIILGKVESEVSHEIAVMVKESEVRAKEEADKKAKEILSLAMQRCAADHVAETTVSVVNLPNDEMKGRIIGREGRNIRTLETLTGIDLIIDDTPEAVILSGFDPIRRETARIALDKLVQDGRIHPARIEEMVEKSRREVDEYIREVGEQTTFEVGVHGLHPDLIKILGRLKYRTSYGQNVLKHSMEVAYLTGLMAAELGEDEKLARRAGLLHDIGKAIDHEVEGSHVEIGVELATKYKEHPVVINSIASHHGDTEPTSIIAVLVAAADALSAARPGARSETLENYIRRLEKLEEISESYEGVEKSFAIQAGREVRILVKPDTIDDLEAHRLARDIRKRIENELDYPGHIKVTVIRETRAVEYAK</sequence>
<name>RNY_BACAH</name>
<accession>A0RHF0</accession>
<feature type="chain" id="PRO_0000344821" description="Ribonuclease Y">
    <location>
        <begin position="1"/>
        <end position="520"/>
    </location>
</feature>
<feature type="transmembrane region" description="Helical" evidence="1">
    <location>
        <begin position="4"/>
        <end position="24"/>
    </location>
</feature>
<feature type="domain" description="KH" evidence="1">
    <location>
        <begin position="210"/>
        <end position="273"/>
    </location>
</feature>
<feature type="domain" description="HD" evidence="2">
    <location>
        <begin position="336"/>
        <end position="429"/>
    </location>
</feature>
<reference key="1">
    <citation type="journal article" date="2007" name="J. Bacteriol.">
        <title>The complete genome sequence of Bacillus thuringiensis Al Hakam.</title>
        <authorList>
            <person name="Challacombe J.F."/>
            <person name="Altherr M.R."/>
            <person name="Xie G."/>
            <person name="Bhotika S.S."/>
            <person name="Brown N."/>
            <person name="Bruce D."/>
            <person name="Campbell C.S."/>
            <person name="Campbell M.L."/>
            <person name="Chen J."/>
            <person name="Chertkov O."/>
            <person name="Cleland C."/>
            <person name="Dimitrijevic M."/>
            <person name="Doggett N.A."/>
            <person name="Fawcett J.J."/>
            <person name="Glavina T."/>
            <person name="Goodwin L.A."/>
            <person name="Green L.D."/>
            <person name="Han C.S."/>
            <person name="Hill K.K."/>
            <person name="Hitchcock P."/>
            <person name="Jackson P.J."/>
            <person name="Keim P."/>
            <person name="Kewalramani A.R."/>
            <person name="Longmire J."/>
            <person name="Lucas S."/>
            <person name="Malfatti S."/>
            <person name="Martinez D."/>
            <person name="McMurry K."/>
            <person name="Meincke L.J."/>
            <person name="Misra M."/>
            <person name="Moseman B.L."/>
            <person name="Mundt M."/>
            <person name="Munk A.C."/>
            <person name="Okinaka R.T."/>
            <person name="Parson-Quintana B."/>
            <person name="Reilly L.P."/>
            <person name="Richardson P."/>
            <person name="Robinson D.L."/>
            <person name="Saunders E."/>
            <person name="Tapia R."/>
            <person name="Tesmer J.G."/>
            <person name="Thayer N."/>
            <person name="Thompson L.S."/>
            <person name="Tice H."/>
            <person name="Ticknor L.O."/>
            <person name="Wills P.L."/>
            <person name="Gilna P."/>
            <person name="Brettin T.S."/>
        </authorList>
    </citation>
    <scope>NUCLEOTIDE SEQUENCE [LARGE SCALE GENOMIC DNA]</scope>
    <source>
        <strain>Al Hakam</strain>
    </source>
</reference>
<organism>
    <name type="scientific">Bacillus thuringiensis (strain Al Hakam)</name>
    <dbReference type="NCBI Taxonomy" id="412694"/>
    <lineage>
        <taxon>Bacteria</taxon>
        <taxon>Bacillati</taxon>
        <taxon>Bacillota</taxon>
        <taxon>Bacilli</taxon>
        <taxon>Bacillales</taxon>
        <taxon>Bacillaceae</taxon>
        <taxon>Bacillus</taxon>
        <taxon>Bacillus cereus group</taxon>
    </lineage>
</organism>
<protein>
    <recommendedName>
        <fullName evidence="1">Ribonuclease Y</fullName>
        <shortName evidence="1">RNase Y</shortName>
        <ecNumber evidence="1">3.1.-.-</ecNumber>
    </recommendedName>
</protein>
<keyword id="KW-1003">Cell membrane</keyword>
<keyword id="KW-0255">Endonuclease</keyword>
<keyword id="KW-0378">Hydrolase</keyword>
<keyword id="KW-0472">Membrane</keyword>
<keyword id="KW-0540">Nuclease</keyword>
<keyword id="KW-0694">RNA-binding</keyword>
<keyword id="KW-0812">Transmembrane</keyword>
<keyword id="KW-1133">Transmembrane helix</keyword>
<evidence type="ECO:0000255" key="1">
    <source>
        <dbReference type="HAMAP-Rule" id="MF_00335"/>
    </source>
</evidence>
<evidence type="ECO:0000255" key="2">
    <source>
        <dbReference type="PROSITE-ProRule" id="PRU01175"/>
    </source>
</evidence>
<evidence type="ECO:0000305" key="3"/>
<dbReference type="EC" id="3.1.-.-" evidence="1"/>
<dbReference type="EMBL" id="CP000485">
    <property type="protein sequence ID" value="ABK86643.1"/>
    <property type="status" value="ALT_INIT"/>
    <property type="molecule type" value="Genomic_DNA"/>
</dbReference>
<dbReference type="RefSeq" id="WP_000099773.1">
    <property type="nucleotide sequence ID" value="NC_008600.1"/>
</dbReference>
<dbReference type="SMR" id="A0RHF0"/>
<dbReference type="GeneID" id="45023607"/>
<dbReference type="KEGG" id="btl:BALH_3406"/>
<dbReference type="HOGENOM" id="CLU_028328_1_0_9"/>
<dbReference type="GO" id="GO:0005886">
    <property type="term" value="C:plasma membrane"/>
    <property type="evidence" value="ECO:0007669"/>
    <property type="project" value="UniProtKB-SubCell"/>
</dbReference>
<dbReference type="GO" id="GO:0003723">
    <property type="term" value="F:RNA binding"/>
    <property type="evidence" value="ECO:0007669"/>
    <property type="project" value="UniProtKB-UniRule"/>
</dbReference>
<dbReference type="GO" id="GO:0004521">
    <property type="term" value="F:RNA endonuclease activity"/>
    <property type="evidence" value="ECO:0007669"/>
    <property type="project" value="UniProtKB-UniRule"/>
</dbReference>
<dbReference type="GO" id="GO:0006402">
    <property type="term" value="P:mRNA catabolic process"/>
    <property type="evidence" value="ECO:0007669"/>
    <property type="project" value="UniProtKB-UniRule"/>
</dbReference>
<dbReference type="CDD" id="cd00077">
    <property type="entry name" value="HDc"/>
    <property type="match status" value="1"/>
</dbReference>
<dbReference type="CDD" id="cd22431">
    <property type="entry name" value="KH-I_RNaseY"/>
    <property type="match status" value="1"/>
</dbReference>
<dbReference type="FunFam" id="1.10.3210.10:FF:000003">
    <property type="entry name" value="Ribonuclease Y"/>
    <property type="match status" value="1"/>
</dbReference>
<dbReference type="FunFam" id="3.30.1370.10:FF:000006">
    <property type="entry name" value="Ribonuclease Y"/>
    <property type="match status" value="1"/>
</dbReference>
<dbReference type="Gene3D" id="1.10.3210.10">
    <property type="entry name" value="Hypothetical protein af1432"/>
    <property type="match status" value="1"/>
</dbReference>
<dbReference type="Gene3D" id="3.30.1370.10">
    <property type="entry name" value="K Homology domain, type 1"/>
    <property type="match status" value="1"/>
</dbReference>
<dbReference type="HAMAP" id="MF_00335">
    <property type="entry name" value="RNase_Y"/>
    <property type="match status" value="1"/>
</dbReference>
<dbReference type="InterPro" id="IPR003607">
    <property type="entry name" value="HD/PDEase_dom"/>
</dbReference>
<dbReference type="InterPro" id="IPR006674">
    <property type="entry name" value="HD_domain"/>
</dbReference>
<dbReference type="InterPro" id="IPR006675">
    <property type="entry name" value="HDIG_dom"/>
</dbReference>
<dbReference type="InterPro" id="IPR004087">
    <property type="entry name" value="KH_dom"/>
</dbReference>
<dbReference type="InterPro" id="IPR004088">
    <property type="entry name" value="KH_dom_type_1"/>
</dbReference>
<dbReference type="InterPro" id="IPR036612">
    <property type="entry name" value="KH_dom_type_1_sf"/>
</dbReference>
<dbReference type="InterPro" id="IPR017705">
    <property type="entry name" value="Ribonuclease_Y"/>
</dbReference>
<dbReference type="InterPro" id="IPR022711">
    <property type="entry name" value="RNase_Y_N"/>
</dbReference>
<dbReference type="NCBIfam" id="TIGR00277">
    <property type="entry name" value="HDIG"/>
    <property type="match status" value="1"/>
</dbReference>
<dbReference type="NCBIfam" id="TIGR03319">
    <property type="entry name" value="RNase_Y"/>
    <property type="match status" value="1"/>
</dbReference>
<dbReference type="PANTHER" id="PTHR12826">
    <property type="entry name" value="RIBONUCLEASE Y"/>
    <property type="match status" value="1"/>
</dbReference>
<dbReference type="PANTHER" id="PTHR12826:SF15">
    <property type="entry name" value="RIBONUCLEASE Y"/>
    <property type="match status" value="1"/>
</dbReference>
<dbReference type="Pfam" id="PF01966">
    <property type="entry name" value="HD"/>
    <property type="match status" value="1"/>
</dbReference>
<dbReference type="Pfam" id="PF00013">
    <property type="entry name" value="KH_1"/>
    <property type="match status" value="1"/>
</dbReference>
<dbReference type="Pfam" id="PF12072">
    <property type="entry name" value="RNase_Y_N"/>
    <property type="match status" value="1"/>
</dbReference>
<dbReference type="SMART" id="SM00471">
    <property type="entry name" value="HDc"/>
    <property type="match status" value="1"/>
</dbReference>
<dbReference type="SMART" id="SM00322">
    <property type="entry name" value="KH"/>
    <property type="match status" value="1"/>
</dbReference>
<dbReference type="SUPFAM" id="SSF54791">
    <property type="entry name" value="Eukaryotic type KH-domain (KH-domain type I)"/>
    <property type="match status" value="1"/>
</dbReference>
<dbReference type="SUPFAM" id="SSF109604">
    <property type="entry name" value="HD-domain/PDEase-like"/>
    <property type="match status" value="1"/>
</dbReference>
<dbReference type="PROSITE" id="PS51831">
    <property type="entry name" value="HD"/>
    <property type="match status" value="1"/>
</dbReference>
<dbReference type="PROSITE" id="PS50084">
    <property type="entry name" value="KH_TYPE_1"/>
    <property type="match status" value="1"/>
</dbReference>
<proteinExistence type="inferred from homology"/>
<comment type="function">
    <text evidence="1">Endoribonuclease that initiates mRNA decay.</text>
</comment>
<comment type="subcellular location">
    <subcellularLocation>
        <location evidence="1">Cell membrane</location>
        <topology evidence="1">Single-pass membrane protein</topology>
    </subcellularLocation>
</comment>
<comment type="similarity">
    <text evidence="1">Belongs to the RNase Y family.</text>
</comment>
<comment type="sequence caution" evidence="3">
    <conflict type="erroneous initiation">
        <sequence resource="EMBL-CDS" id="ABK86643"/>
    </conflict>
</comment>